<feature type="chain" id="PRO_0000114415" description="Tubulin-like protein CetZ">
    <location>
        <begin position="1"/>
        <end position="365"/>
    </location>
</feature>
<feature type="binding site" evidence="1">
    <location>
        <begin position="10"/>
        <end position="14"/>
    </location>
    <ligand>
        <name>GTP</name>
        <dbReference type="ChEBI" id="CHEBI:37565"/>
    </ligand>
</feature>
<feature type="binding site" evidence="1">
    <location>
        <begin position="103"/>
        <end position="105"/>
    </location>
    <ligand>
        <name>GTP</name>
        <dbReference type="ChEBI" id="CHEBI:37565"/>
    </ligand>
</feature>
<feature type="binding site" evidence="1">
    <location>
        <position position="136"/>
    </location>
    <ligand>
        <name>GTP</name>
        <dbReference type="ChEBI" id="CHEBI:37565"/>
    </ligand>
</feature>
<feature type="binding site" evidence="1">
    <location>
        <position position="163"/>
    </location>
    <ligand>
        <name>GTP</name>
        <dbReference type="ChEBI" id="CHEBI:37565"/>
    </ligand>
</feature>
<feature type="binding site" evidence="1">
    <location>
        <position position="181"/>
    </location>
    <ligand>
        <name>GTP</name>
        <dbReference type="ChEBI" id="CHEBI:37565"/>
    </ligand>
</feature>
<gene>
    <name evidence="1" type="primary">cetZ</name>
    <name type="synonym">ftsZ3</name>
    <name type="ordered locus">PH1335</name>
</gene>
<sequence length="365" mass="40118">MRAIIIGIGQCGTKIADIFSLVDFEALAINTSKSDLEYLKHIPPERRILVGESIVGGKGVNANPLLGREAMKRDLPMVMKKISSLVGYEDVDIFFLTFGFGGGTGAGGTPVLAEALKEEYPDSLVVAIGALPLKEEGIRPTINAAITIDKLSRIVDSIIAIDNNKLKESDEDISQAYEKINYAIVERIASLLALIDVPGEQTLDASDLKFVLRAMGSFATVGYAKADATKIKSLSRLIIRSFENEGLYLDVNLESALYGLVAIHGPPEVLKAKEIFDALSELSQRIRGKQIFRGFYPDPREREVEVVTLLSGIYESKSIENIVITAKRYAREFMKAKEEGEMKKRELLKGLPDFEDIYPGEVDEG</sequence>
<evidence type="ECO:0000255" key="1">
    <source>
        <dbReference type="HAMAP-Rule" id="MF_01946"/>
    </source>
</evidence>
<accession>O59060</accession>
<dbReference type="EMBL" id="BA000001">
    <property type="protein sequence ID" value="BAA30441.1"/>
    <property type="molecule type" value="Genomic_DNA"/>
</dbReference>
<dbReference type="PIR" id="A71005">
    <property type="entry name" value="A71005"/>
</dbReference>
<dbReference type="RefSeq" id="WP_010885424.1">
    <property type="nucleotide sequence ID" value="NC_000961.1"/>
</dbReference>
<dbReference type="SMR" id="O59060"/>
<dbReference type="STRING" id="70601.gene:9378311"/>
<dbReference type="EnsemblBacteria" id="BAA30441">
    <property type="protein sequence ID" value="BAA30441"/>
    <property type="gene ID" value="BAA30441"/>
</dbReference>
<dbReference type="GeneID" id="1443661"/>
<dbReference type="KEGG" id="pho:PH1335"/>
<dbReference type="eggNOG" id="arCOG02202">
    <property type="taxonomic scope" value="Archaea"/>
</dbReference>
<dbReference type="OrthoDB" id="329751at2157"/>
<dbReference type="Proteomes" id="UP000000752">
    <property type="component" value="Chromosome"/>
</dbReference>
<dbReference type="GO" id="GO:0032153">
    <property type="term" value="C:cell division site"/>
    <property type="evidence" value="ECO:0007669"/>
    <property type="project" value="TreeGrafter"/>
</dbReference>
<dbReference type="GO" id="GO:0005737">
    <property type="term" value="C:cytoplasm"/>
    <property type="evidence" value="ECO:0007669"/>
    <property type="project" value="UniProtKB-SubCell"/>
</dbReference>
<dbReference type="GO" id="GO:0005874">
    <property type="term" value="C:microtubule"/>
    <property type="evidence" value="ECO:0007669"/>
    <property type="project" value="InterPro"/>
</dbReference>
<dbReference type="GO" id="GO:0005525">
    <property type="term" value="F:GTP binding"/>
    <property type="evidence" value="ECO:0007669"/>
    <property type="project" value="UniProtKB-UniRule"/>
</dbReference>
<dbReference type="GO" id="GO:0003924">
    <property type="term" value="F:GTPase activity"/>
    <property type="evidence" value="ECO:0007669"/>
    <property type="project" value="InterPro"/>
</dbReference>
<dbReference type="GO" id="GO:0051301">
    <property type="term" value="P:cell division"/>
    <property type="evidence" value="ECO:0007669"/>
    <property type="project" value="TreeGrafter"/>
</dbReference>
<dbReference type="GO" id="GO:0007017">
    <property type="term" value="P:microtubule-based process"/>
    <property type="evidence" value="ECO:0007669"/>
    <property type="project" value="InterPro"/>
</dbReference>
<dbReference type="GO" id="GO:0008360">
    <property type="term" value="P:regulation of cell shape"/>
    <property type="evidence" value="ECO:0007669"/>
    <property type="project" value="UniProtKB-UniRule"/>
</dbReference>
<dbReference type="CDD" id="cd02202">
    <property type="entry name" value="CetZ_tubulin-like"/>
    <property type="match status" value="1"/>
</dbReference>
<dbReference type="FunFam" id="3.40.50.1440:FF:000065">
    <property type="entry name" value="Tubulin-like protein CetZ"/>
    <property type="match status" value="1"/>
</dbReference>
<dbReference type="Gene3D" id="3.40.50.1440">
    <property type="entry name" value="Tubulin/FtsZ, GTPase domain"/>
    <property type="match status" value="1"/>
</dbReference>
<dbReference type="HAMAP" id="MF_01946">
    <property type="entry name" value="CetZ"/>
    <property type="match status" value="1"/>
</dbReference>
<dbReference type="InterPro" id="IPR032907">
    <property type="entry name" value="CetZ"/>
</dbReference>
<dbReference type="InterPro" id="IPR048737">
    <property type="entry name" value="CetZ_C"/>
</dbReference>
<dbReference type="InterPro" id="IPR045061">
    <property type="entry name" value="FtsZ/CetZ"/>
</dbReference>
<dbReference type="InterPro" id="IPR036525">
    <property type="entry name" value="Tubulin/FtsZ_GTPase_sf"/>
</dbReference>
<dbReference type="InterPro" id="IPR017975">
    <property type="entry name" value="Tubulin_CS"/>
</dbReference>
<dbReference type="InterPro" id="IPR003008">
    <property type="entry name" value="Tubulin_FtsZ_GTPase"/>
</dbReference>
<dbReference type="PANTHER" id="PTHR30314">
    <property type="entry name" value="CELL DIVISION PROTEIN FTSZ-RELATED"/>
    <property type="match status" value="1"/>
</dbReference>
<dbReference type="PANTHER" id="PTHR30314:SF10">
    <property type="entry name" value="TUBULIN-LIKE PROTEIN CETZ"/>
    <property type="match status" value="1"/>
</dbReference>
<dbReference type="Pfam" id="PF21011">
    <property type="entry name" value="CetZ_C"/>
    <property type="match status" value="1"/>
</dbReference>
<dbReference type="Pfam" id="PF00091">
    <property type="entry name" value="Tubulin"/>
    <property type="match status" value="1"/>
</dbReference>
<dbReference type="PRINTS" id="PR00423">
    <property type="entry name" value="CELLDVISFTSZ"/>
</dbReference>
<dbReference type="SMART" id="SM00864">
    <property type="entry name" value="Tubulin"/>
    <property type="match status" value="1"/>
</dbReference>
<dbReference type="SUPFAM" id="SSF52490">
    <property type="entry name" value="Tubulin nucleotide-binding domain-like"/>
    <property type="match status" value="1"/>
</dbReference>
<dbReference type="PROSITE" id="PS00227">
    <property type="entry name" value="TUBULIN"/>
    <property type="match status" value="1"/>
</dbReference>
<keyword id="KW-0133">Cell shape</keyword>
<keyword id="KW-0963">Cytoplasm</keyword>
<keyword id="KW-0342">GTP-binding</keyword>
<keyword id="KW-0547">Nucleotide-binding</keyword>
<name>CETZ_PYRHO</name>
<comment type="function">
    <text evidence="1">Involved in cell shape control.</text>
</comment>
<comment type="subcellular location">
    <subcellularLocation>
        <location evidence="1">Cytoplasm</location>
    </subcellularLocation>
</comment>
<comment type="similarity">
    <text evidence="1">Belongs to the CetZ family.</text>
</comment>
<organism>
    <name type="scientific">Pyrococcus horikoshii (strain ATCC 700860 / DSM 12428 / JCM 9974 / NBRC 100139 / OT-3)</name>
    <dbReference type="NCBI Taxonomy" id="70601"/>
    <lineage>
        <taxon>Archaea</taxon>
        <taxon>Methanobacteriati</taxon>
        <taxon>Methanobacteriota</taxon>
        <taxon>Thermococci</taxon>
        <taxon>Thermococcales</taxon>
        <taxon>Thermococcaceae</taxon>
        <taxon>Pyrococcus</taxon>
    </lineage>
</organism>
<proteinExistence type="inferred from homology"/>
<reference key="1">
    <citation type="journal article" date="1998" name="DNA Res.">
        <title>Complete sequence and gene organization of the genome of a hyper-thermophilic archaebacterium, Pyrococcus horikoshii OT3.</title>
        <authorList>
            <person name="Kawarabayasi Y."/>
            <person name="Sawada M."/>
            <person name="Horikawa H."/>
            <person name="Haikawa Y."/>
            <person name="Hino Y."/>
            <person name="Yamamoto S."/>
            <person name="Sekine M."/>
            <person name="Baba S."/>
            <person name="Kosugi H."/>
            <person name="Hosoyama A."/>
            <person name="Nagai Y."/>
            <person name="Sakai M."/>
            <person name="Ogura K."/>
            <person name="Otsuka R."/>
            <person name="Nakazawa H."/>
            <person name="Takamiya M."/>
            <person name="Ohfuku Y."/>
            <person name="Funahashi T."/>
            <person name="Tanaka T."/>
            <person name="Kudoh Y."/>
            <person name="Yamazaki J."/>
            <person name="Kushida N."/>
            <person name="Oguchi A."/>
            <person name="Aoki K."/>
            <person name="Yoshizawa T."/>
            <person name="Nakamura Y."/>
            <person name="Robb F.T."/>
            <person name="Horikoshi K."/>
            <person name="Masuchi Y."/>
            <person name="Shizuya H."/>
            <person name="Kikuchi H."/>
        </authorList>
    </citation>
    <scope>NUCLEOTIDE SEQUENCE [LARGE SCALE GENOMIC DNA]</scope>
    <source>
        <strain>ATCC 700860 / DSM 12428 / JCM 9974 / NBRC 100139 / OT-3</strain>
    </source>
</reference>
<protein>
    <recommendedName>
        <fullName evidence="1">Tubulin-like protein CetZ</fullName>
    </recommendedName>
</protein>